<protein>
    <recommendedName>
        <fullName>NADH-ubiquinone oxidoreductase chain 3</fullName>
        <ecNumber>7.1.1.2</ecNumber>
    </recommendedName>
    <alternativeName>
        <fullName>NADH dehydrogenase subunit 3</fullName>
    </alternativeName>
</protein>
<sequence>MSEFAPICIYLVISPLVSLIPLGLPFLFSSNSSTYPEKSSAYECGLDPSGDARSRVDIRFYLVSILFIIPDPEVTFSFPWAVPPNKIDPFGSWSMMAFLLILTIGSLYEWKRGASDRE</sequence>
<accession>O99869</accession>
<feature type="chain" id="PRO_0000117834" description="NADH-ubiquinone oxidoreductase chain 3">
    <location>
        <begin position="1"/>
        <end position="118"/>
    </location>
</feature>
<feature type="transmembrane region" description="Helical" evidence="2">
    <location>
        <begin position="7"/>
        <end position="27"/>
    </location>
</feature>
<feature type="transmembrane region" description="Helical" evidence="2">
    <location>
        <begin position="87"/>
        <end position="107"/>
    </location>
</feature>
<evidence type="ECO:0000250" key="1"/>
<evidence type="ECO:0000255" key="2"/>
<evidence type="ECO:0000305" key="3"/>
<comment type="function">
    <text evidence="1">Core subunit of the mitochondrial membrane respiratory chain NADH dehydrogenase (Complex I) that is believed to belong to the minimal assembly required for catalysis. Complex I functions in the transfer of electrons from NADH to the respiratory chain. The immediate electron acceptor for the enzyme is believed to be ubiquinone (By similarity).</text>
</comment>
<comment type="catalytic activity">
    <reaction>
        <text>a ubiquinone + NADH + 5 H(+)(in) = a ubiquinol + NAD(+) + 4 H(+)(out)</text>
        <dbReference type="Rhea" id="RHEA:29091"/>
        <dbReference type="Rhea" id="RHEA-COMP:9565"/>
        <dbReference type="Rhea" id="RHEA-COMP:9566"/>
        <dbReference type="ChEBI" id="CHEBI:15378"/>
        <dbReference type="ChEBI" id="CHEBI:16389"/>
        <dbReference type="ChEBI" id="CHEBI:17976"/>
        <dbReference type="ChEBI" id="CHEBI:57540"/>
        <dbReference type="ChEBI" id="CHEBI:57945"/>
        <dbReference type="EC" id="7.1.1.2"/>
    </reaction>
</comment>
<comment type="subcellular location">
    <subcellularLocation>
        <location evidence="1">Mitochondrion membrane</location>
        <topology evidence="1">Multi-pass membrane protein</topology>
    </subcellularLocation>
</comment>
<comment type="similarity">
    <text evidence="3">Belongs to the complex I subunit 3 family.</text>
</comment>
<organism>
    <name type="scientific">Solanum tuberosum</name>
    <name type="common">Potato</name>
    <dbReference type="NCBI Taxonomy" id="4113"/>
    <lineage>
        <taxon>Eukaryota</taxon>
        <taxon>Viridiplantae</taxon>
        <taxon>Streptophyta</taxon>
        <taxon>Embryophyta</taxon>
        <taxon>Tracheophyta</taxon>
        <taxon>Spermatophyta</taxon>
        <taxon>Magnoliopsida</taxon>
        <taxon>eudicotyledons</taxon>
        <taxon>Gunneridae</taxon>
        <taxon>Pentapetalae</taxon>
        <taxon>asterids</taxon>
        <taxon>lamiids</taxon>
        <taxon>Solanales</taxon>
        <taxon>Solanaceae</taxon>
        <taxon>Solanoideae</taxon>
        <taxon>Solaneae</taxon>
        <taxon>Solanum</taxon>
    </lineage>
</organism>
<geneLocation type="mitochondrion"/>
<gene>
    <name type="primary">ND3</name>
    <name type="synonym">NAD3</name>
</gene>
<proteinExistence type="inferred from homology"/>
<name>NU3M_SOLTU</name>
<keyword id="KW-0249">Electron transport</keyword>
<keyword id="KW-0472">Membrane</keyword>
<keyword id="KW-0496">Mitochondrion</keyword>
<keyword id="KW-0520">NAD</keyword>
<keyword id="KW-1185">Reference proteome</keyword>
<keyword id="KW-0679">Respiratory chain</keyword>
<keyword id="KW-1278">Translocase</keyword>
<keyword id="KW-0812">Transmembrane</keyword>
<keyword id="KW-1133">Transmembrane helix</keyword>
<keyword id="KW-0813">Transport</keyword>
<keyword id="KW-0830">Ubiquinone</keyword>
<dbReference type="EC" id="7.1.1.2"/>
<dbReference type="EMBL" id="AF095279">
    <property type="protein sequence ID" value="AAD03038.1"/>
    <property type="molecule type" value="Genomic_DNA"/>
</dbReference>
<dbReference type="SMR" id="O99869"/>
<dbReference type="FunCoup" id="O99869">
    <property type="interactions" value="44"/>
</dbReference>
<dbReference type="STRING" id="4113.O99869"/>
<dbReference type="InParanoid" id="O99869"/>
<dbReference type="Proteomes" id="UP000011115">
    <property type="component" value="Unassembled WGS sequence"/>
</dbReference>
<dbReference type="GO" id="GO:0031966">
    <property type="term" value="C:mitochondrial membrane"/>
    <property type="evidence" value="ECO:0007669"/>
    <property type="project" value="UniProtKB-SubCell"/>
</dbReference>
<dbReference type="GO" id="GO:0030964">
    <property type="term" value="C:NADH dehydrogenase complex"/>
    <property type="evidence" value="ECO:0000318"/>
    <property type="project" value="GO_Central"/>
</dbReference>
<dbReference type="GO" id="GO:0008137">
    <property type="term" value="F:NADH dehydrogenase (ubiquinone) activity"/>
    <property type="evidence" value="ECO:0000318"/>
    <property type="project" value="GO_Central"/>
</dbReference>
<dbReference type="FunFam" id="1.20.58.1610:FF:000006">
    <property type="entry name" value="NADH-ubiquinone oxidoreductase chain 3"/>
    <property type="match status" value="1"/>
</dbReference>
<dbReference type="Gene3D" id="1.20.58.1610">
    <property type="entry name" value="NADH:ubiquinone/plastoquinone oxidoreductase, chain 3"/>
    <property type="match status" value="1"/>
</dbReference>
<dbReference type="InterPro" id="IPR000440">
    <property type="entry name" value="NADH_UbQ/plastoQ_OxRdtase_su3"/>
</dbReference>
<dbReference type="InterPro" id="IPR038430">
    <property type="entry name" value="NDAH_ubi_oxred_su3_sf"/>
</dbReference>
<dbReference type="PANTHER" id="PTHR11058">
    <property type="entry name" value="NADH-UBIQUINONE OXIDOREDUCTASE CHAIN 3"/>
    <property type="match status" value="1"/>
</dbReference>
<dbReference type="PANTHER" id="PTHR11058:SF9">
    <property type="entry name" value="NADH-UBIQUINONE OXIDOREDUCTASE CHAIN 3"/>
    <property type="match status" value="1"/>
</dbReference>
<dbReference type="Pfam" id="PF00507">
    <property type="entry name" value="Oxidored_q4"/>
    <property type="match status" value="1"/>
</dbReference>
<reference key="1">
    <citation type="journal article" date="1999" name="Theor. Appl. Genet.">
        <title>Chondriome type characterization of potato mt alpha, beta, gamma, delta, epsilon and novel plastid-mitochondrial configurations in somatic hybrids.</title>
        <authorList>
            <person name="Loessl A."/>
            <person name="Adler N."/>
            <person name="Horn R."/>
            <person name="Frei U."/>
            <person name="Wenzel G."/>
        </authorList>
        <dbReference type="AGRICOLA" id="IND21999078"/>
    </citation>
    <scope>NUCLEOTIDE SEQUENCE [GENOMIC DNA]</scope>
</reference>